<feature type="chain" id="PRO_1000115410" description="Chorismate synthase">
    <location>
        <begin position="1"/>
        <end position="365"/>
    </location>
</feature>
<feature type="binding site" evidence="1">
    <location>
        <position position="46"/>
    </location>
    <ligand>
        <name>NADP(+)</name>
        <dbReference type="ChEBI" id="CHEBI:58349"/>
    </ligand>
</feature>
<feature type="binding site" evidence="1">
    <location>
        <begin position="124"/>
        <end position="126"/>
    </location>
    <ligand>
        <name>FMN</name>
        <dbReference type="ChEBI" id="CHEBI:58210"/>
    </ligand>
</feature>
<feature type="binding site" evidence="1">
    <location>
        <position position="284"/>
    </location>
    <ligand>
        <name>FMN</name>
        <dbReference type="ChEBI" id="CHEBI:58210"/>
    </ligand>
</feature>
<feature type="binding site" evidence="1">
    <location>
        <begin position="299"/>
        <end position="303"/>
    </location>
    <ligand>
        <name>FMN</name>
        <dbReference type="ChEBI" id="CHEBI:58210"/>
    </ligand>
</feature>
<feature type="binding site" evidence="1">
    <location>
        <position position="326"/>
    </location>
    <ligand>
        <name>FMN</name>
        <dbReference type="ChEBI" id="CHEBI:58210"/>
    </ligand>
</feature>
<keyword id="KW-0028">Amino-acid biosynthesis</keyword>
<keyword id="KW-0057">Aromatic amino acid biosynthesis</keyword>
<keyword id="KW-0274">FAD</keyword>
<keyword id="KW-0285">Flavoprotein</keyword>
<keyword id="KW-0288">FMN</keyword>
<keyword id="KW-0456">Lyase</keyword>
<keyword id="KW-0521">NADP</keyword>
<reference key="1">
    <citation type="submission" date="2008-03" db="EMBL/GenBank/DDBJ databases">
        <title>Complete sequence of Thermoproteus neutrophilus V24Sta.</title>
        <authorList>
            <consortium name="US DOE Joint Genome Institute"/>
            <person name="Copeland A."/>
            <person name="Lucas S."/>
            <person name="Lapidus A."/>
            <person name="Glavina del Rio T."/>
            <person name="Dalin E."/>
            <person name="Tice H."/>
            <person name="Bruce D."/>
            <person name="Goodwin L."/>
            <person name="Pitluck S."/>
            <person name="Sims D."/>
            <person name="Brettin T."/>
            <person name="Detter J.C."/>
            <person name="Han C."/>
            <person name="Kuske C.R."/>
            <person name="Schmutz J."/>
            <person name="Larimer F."/>
            <person name="Land M."/>
            <person name="Hauser L."/>
            <person name="Kyrpides N."/>
            <person name="Mikhailova N."/>
            <person name="Biddle J.F."/>
            <person name="Zhang Z."/>
            <person name="Fitz-Gibbon S.T."/>
            <person name="Lowe T.M."/>
            <person name="Saltikov C."/>
            <person name="House C.H."/>
            <person name="Richardson P."/>
        </authorList>
    </citation>
    <scope>NUCLEOTIDE SEQUENCE [LARGE SCALE GENOMIC DNA]</scope>
    <source>
        <strain>DSM 2338 / JCM 9278 / NBRC 100436 / V24Sta</strain>
    </source>
</reference>
<accession>B1YD56</accession>
<dbReference type="EC" id="4.2.3.5" evidence="1"/>
<dbReference type="EMBL" id="CP001014">
    <property type="protein sequence ID" value="ACB39719.1"/>
    <property type="molecule type" value="Genomic_DNA"/>
</dbReference>
<dbReference type="RefSeq" id="WP_012350139.1">
    <property type="nucleotide sequence ID" value="NC_010525.1"/>
</dbReference>
<dbReference type="SMR" id="B1YD56"/>
<dbReference type="STRING" id="444157.Tneu_0780"/>
<dbReference type="GeneID" id="6164324"/>
<dbReference type="KEGG" id="tne:Tneu_0780"/>
<dbReference type="eggNOG" id="arCOG04133">
    <property type="taxonomic scope" value="Archaea"/>
</dbReference>
<dbReference type="HOGENOM" id="CLU_034547_0_0_2"/>
<dbReference type="OrthoDB" id="33049at2157"/>
<dbReference type="UniPathway" id="UPA00053">
    <property type="reaction ID" value="UER00090"/>
</dbReference>
<dbReference type="Proteomes" id="UP000001694">
    <property type="component" value="Chromosome"/>
</dbReference>
<dbReference type="GO" id="GO:0005829">
    <property type="term" value="C:cytosol"/>
    <property type="evidence" value="ECO:0007669"/>
    <property type="project" value="TreeGrafter"/>
</dbReference>
<dbReference type="GO" id="GO:0004107">
    <property type="term" value="F:chorismate synthase activity"/>
    <property type="evidence" value="ECO:0007669"/>
    <property type="project" value="UniProtKB-UniRule"/>
</dbReference>
<dbReference type="GO" id="GO:0010181">
    <property type="term" value="F:FMN binding"/>
    <property type="evidence" value="ECO:0007669"/>
    <property type="project" value="TreeGrafter"/>
</dbReference>
<dbReference type="GO" id="GO:0008652">
    <property type="term" value="P:amino acid biosynthetic process"/>
    <property type="evidence" value="ECO:0007669"/>
    <property type="project" value="UniProtKB-KW"/>
</dbReference>
<dbReference type="GO" id="GO:0009073">
    <property type="term" value="P:aromatic amino acid family biosynthetic process"/>
    <property type="evidence" value="ECO:0007669"/>
    <property type="project" value="UniProtKB-KW"/>
</dbReference>
<dbReference type="GO" id="GO:0009423">
    <property type="term" value="P:chorismate biosynthetic process"/>
    <property type="evidence" value="ECO:0007669"/>
    <property type="project" value="UniProtKB-UniRule"/>
</dbReference>
<dbReference type="CDD" id="cd07304">
    <property type="entry name" value="Chorismate_synthase"/>
    <property type="match status" value="1"/>
</dbReference>
<dbReference type="Gene3D" id="3.60.150.10">
    <property type="entry name" value="Chorismate synthase AroC"/>
    <property type="match status" value="1"/>
</dbReference>
<dbReference type="HAMAP" id="MF_00300">
    <property type="entry name" value="Chorismate_synth"/>
    <property type="match status" value="1"/>
</dbReference>
<dbReference type="InterPro" id="IPR000453">
    <property type="entry name" value="Chorismate_synth"/>
</dbReference>
<dbReference type="InterPro" id="IPR035904">
    <property type="entry name" value="Chorismate_synth_AroC_sf"/>
</dbReference>
<dbReference type="InterPro" id="IPR020541">
    <property type="entry name" value="Chorismate_synthase_CS"/>
</dbReference>
<dbReference type="NCBIfam" id="TIGR00033">
    <property type="entry name" value="aroC"/>
    <property type="match status" value="1"/>
</dbReference>
<dbReference type="NCBIfam" id="NF003793">
    <property type="entry name" value="PRK05382.1"/>
    <property type="match status" value="1"/>
</dbReference>
<dbReference type="PANTHER" id="PTHR21085">
    <property type="entry name" value="CHORISMATE SYNTHASE"/>
    <property type="match status" value="1"/>
</dbReference>
<dbReference type="PANTHER" id="PTHR21085:SF0">
    <property type="entry name" value="CHORISMATE SYNTHASE"/>
    <property type="match status" value="1"/>
</dbReference>
<dbReference type="Pfam" id="PF01264">
    <property type="entry name" value="Chorismate_synt"/>
    <property type="match status" value="1"/>
</dbReference>
<dbReference type="PIRSF" id="PIRSF001456">
    <property type="entry name" value="Chorismate_synth"/>
    <property type="match status" value="1"/>
</dbReference>
<dbReference type="SUPFAM" id="SSF103263">
    <property type="entry name" value="Chorismate synthase, AroC"/>
    <property type="match status" value="1"/>
</dbReference>
<dbReference type="PROSITE" id="PS00787">
    <property type="entry name" value="CHORISMATE_SYNTHASE_1"/>
    <property type="match status" value="1"/>
</dbReference>
<dbReference type="PROSITE" id="PS00788">
    <property type="entry name" value="CHORISMATE_SYNTHASE_2"/>
    <property type="match status" value="1"/>
</dbReference>
<gene>
    <name evidence="1" type="primary">aroC</name>
    <name type="ordered locus">Tneu_0780</name>
</gene>
<sequence>MNTFGRELRITTFGESHGKAIGVVIDGVPAGLELTEEDIKRELERRMFCHIPVLNPRCEPEEVEILSGVKEGYTQGTPIAVVIWNRRVISSYYEELWMKPRPGHADFAYYLKYGRHYDHRGGGRASGRTTAAVVAAGAVAKKMLALAGAEVAGHIVELGGVEINASYTYEDVKKSWGRPLPVVDQQALDKMLEKIREAAMRGDSIGGGVEVWAVGVPPGLGEPHFGKIKADIAAAAFSIPGAIALDWGMGRALAKMWGSEANDPITVANGRPTLATNKIGGVLGGITVGTPIYFRAWFKPTPSVRKPQQTVDLAKMEPTTIEFKGRYDVSIVPKALVALEAITAVALADHLLRAGLIRRDKPLGR</sequence>
<proteinExistence type="inferred from homology"/>
<protein>
    <recommendedName>
        <fullName evidence="1">Chorismate synthase</fullName>
        <shortName evidence="1">CS</shortName>
        <ecNumber evidence="1">4.2.3.5</ecNumber>
    </recommendedName>
    <alternativeName>
        <fullName evidence="1">5-enolpyruvylshikimate-3-phosphate phospholyase</fullName>
    </alternativeName>
</protein>
<organism>
    <name type="scientific">Pyrobaculum neutrophilum (strain DSM 2338 / JCM 9278 / NBRC 100436 / V24Sta)</name>
    <name type="common">Thermoproteus neutrophilus</name>
    <dbReference type="NCBI Taxonomy" id="444157"/>
    <lineage>
        <taxon>Archaea</taxon>
        <taxon>Thermoproteota</taxon>
        <taxon>Thermoprotei</taxon>
        <taxon>Thermoproteales</taxon>
        <taxon>Thermoproteaceae</taxon>
        <taxon>Pyrobaculum</taxon>
    </lineage>
</organism>
<name>AROC_PYRNV</name>
<evidence type="ECO:0000255" key="1">
    <source>
        <dbReference type="HAMAP-Rule" id="MF_00300"/>
    </source>
</evidence>
<comment type="function">
    <text evidence="1">Catalyzes the anti-1,4-elimination of the C-3 phosphate and the C-6 proR hydrogen from 5-enolpyruvylshikimate-3-phosphate (EPSP) to yield chorismate, which is the branch point compound that serves as the starting substrate for the three terminal pathways of aromatic amino acid biosynthesis. This reaction introduces a second double bond into the aromatic ring system.</text>
</comment>
<comment type="catalytic activity">
    <reaction evidence="1">
        <text>5-O-(1-carboxyvinyl)-3-phosphoshikimate = chorismate + phosphate</text>
        <dbReference type="Rhea" id="RHEA:21020"/>
        <dbReference type="ChEBI" id="CHEBI:29748"/>
        <dbReference type="ChEBI" id="CHEBI:43474"/>
        <dbReference type="ChEBI" id="CHEBI:57701"/>
        <dbReference type="EC" id="4.2.3.5"/>
    </reaction>
</comment>
<comment type="cofactor">
    <cofactor evidence="1">
        <name>FMNH2</name>
        <dbReference type="ChEBI" id="CHEBI:57618"/>
    </cofactor>
    <text evidence="1">Reduced FMN (FMNH(2)).</text>
</comment>
<comment type="pathway">
    <text evidence="1">Metabolic intermediate biosynthesis; chorismate biosynthesis; chorismate from D-erythrose 4-phosphate and phosphoenolpyruvate: step 7/7.</text>
</comment>
<comment type="similarity">
    <text evidence="1">Belongs to the chorismate synthase family.</text>
</comment>